<sequence>MFTMKKPLLLLFFLGTINLSLCEEERNADEEEKRDGDDEMDAEVEKRFLPAVLKVAAHILPTAICAISRRC</sequence>
<dbReference type="EMBL" id="HQ735148">
    <property type="protein sequence ID" value="ADV36171.1"/>
    <property type="molecule type" value="mRNA"/>
</dbReference>
<dbReference type="GO" id="GO:0005576">
    <property type="term" value="C:extracellular region"/>
    <property type="evidence" value="ECO:0007669"/>
    <property type="project" value="UniProtKB-SubCell"/>
</dbReference>
<dbReference type="GO" id="GO:0050832">
    <property type="term" value="P:defense response to fungus"/>
    <property type="evidence" value="ECO:0000314"/>
    <property type="project" value="UniProtKB"/>
</dbReference>
<dbReference type="GO" id="GO:0050829">
    <property type="term" value="P:defense response to Gram-negative bacterium"/>
    <property type="evidence" value="ECO:0000314"/>
    <property type="project" value="UniProtKB"/>
</dbReference>
<dbReference type="GO" id="GO:0050830">
    <property type="term" value="P:defense response to Gram-positive bacterium"/>
    <property type="evidence" value="ECO:0000314"/>
    <property type="project" value="UniProtKB"/>
</dbReference>
<dbReference type="GO" id="GO:0044179">
    <property type="term" value="P:hemolysis in another organism"/>
    <property type="evidence" value="ECO:0000314"/>
    <property type="project" value="UniProtKB"/>
</dbReference>
<dbReference type="InterPro" id="IPR012520">
    <property type="entry name" value="Antimicrobial_frog_1"/>
</dbReference>
<dbReference type="InterPro" id="IPR004275">
    <property type="entry name" value="Frog_antimicrobial_propeptide"/>
</dbReference>
<dbReference type="Pfam" id="PF08018">
    <property type="entry name" value="Antimicrobial_1"/>
    <property type="match status" value="1"/>
</dbReference>
<dbReference type="Pfam" id="PF03032">
    <property type="entry name" value="FSAP_sig_propep"/>
    <property type="match status" value="1"/>
</dbReference>
<evidence type="ECO:0000250" key="1">
    <source>
        <dbReference type="UniProtKB" id="E7EKC4"/>
    </source>
</evidence>
<evidence type="ECO:0000255" key="2"/>
<evidence type="ECO:0000269" key="3">
    <source>
    </source>
</evidence>
<evidence type="ECO:0000303" key="4">
    <source>
    </source>
</evidence>
<evidence type="ECO:0000305" key="5">
    <source>
    </source>
</evidence>
<evidence type="ECO:0000312" key="6">
    <source>
        <dbReference type="EMBL" id="ADV36171.1"/>
    </source>
</evidence>
<accession>E7EKH1</accession>
<comment type="function">
    <text evidence="3">Antimicrobial peptide. Active against some Gram-negative and a variety of Gram-positive bacterial strains. Active against fungus C.glabrata 090902 but not against C.albicans ATCC 10231. Shows hemolytic activity against human erythrocytes.</text>
</comment>
<comment type="subcellular location">
    <subcellularLocation>
        <location evidence="5">Secreted</location>
    </subcellularLocation>
</comment>
<comment type="tissue specificity">
    <text evidence="5">Expressed by the skin glands.</text>
</comment>
<comment type="similarity">
    <text evidence="2">Belongs to the frog skin active peptide (FSAP) family. Brevinin subfamily.</text>
</comment>
<keyword id="KW-0878">Amphibian defense peptide</keyword>
<keyword id="KW-0044">Antibiotic</keyword>
<keyword id="KW-0929">Antimicrobial</keyword>
<keyword id="KW-0165">Cleavage on pair of basic residues</keyword>
<keyword id="KW-0204">Cytolysis</keyword>
<keyword id="KW-0903">Direct protein sequencing</keyword>
<keyword id="KW-1015">Disulfide bond</keyword>
<keyword id="KW-0295">Fungicide</keyword>
<keyword id="KW-0354">Hemolysis</keyword>
<keyword id="KW-0964">Secreted</keyword>
<keyword id="KW-0732">Signal</keyword>
<proteinExistence type="evidence at protein level"/>
<reference evidence="6" key="1">
    <citation type="journal article" date="2013" name="Biochimie">
        <title>Identification of multiple antimicrobial peptides from the skin of fine-spined frog, Hylarana spinulosa (Ranidae).</title>
        <authorList>
            <person name="Yang X."/>
            <person name="Hu Y."/>
            <person name="Xu S."/>
            <person name="Hu Y."/>
            <person name="Meng H."/>
            <person name="Guo C."/>
            <person name="Liu Y."/>
            <person name="Liu J."/>
            <person name="Yu Z."/>
            <person name="Wang H."/>
        </authorList>
    </citation>
    <scope>NUCLEOTIDE SEQUENCE [MRNA]</scope>
    <scope>PROTEIN SEQUENCE OF 48-71</scope>
    <scope>FUNCTION</scope>
    <scope>SYNTHESIS</scope>
    <scope>IDENTIFICATION BY MASS SPECTROMETRY</scope>
    <source>
        <tissue evidence="4">Skin</tissue>
    </source>
</reference>
<protein>
    <recommendedName>
        <fullName evidence="4">Brevinin-1SN1</fullName>
    </recommendedName>
</protein>
<name>BR11_SYLSP</name>
<organism evidence="4">
    <name type="scientific">Sylvirana spinulosa</name>
    <name type="common">Fine-spined frog</name>
    <name type="synonym">Hylarana spinulosa</name>
    <dbReference type="NCBI Taxonomy" id="369515"/>
    <lineage>
        <taxon>Eukaryota</taxon>
        <taxon>Metazoa</taxon>
        <taxon>Chordata</taxon>
        <taxon>Craniata</taxon>
        <taxon>Vertebrata</taxon>
        <taxon>Euteleostomi</taxon>
        <taxon>Amphibia</taxon>
        <taxon>Batrachia</taxon>
        <taxon>Anura</taxon>
        <taxon>Neobatrachia</taxon>
        <taxon>Ranoidea</taxon>
        <taxon>Ranidae</taxon>
        <taxon>Sylvirana</taxon>
    </lineage>
</organism>
<feature type="signal peptide" evidence="2">
    <location>
        <begin position="1"/>
        <end position="22"/>
    </location>
</feature>
<feature type="propeptide" id="PRO_0000439768" description="Removed in mature form" evidence="5">
    <location>
        <begin position="23"/>
        <end position="45"/>
    </location>
</feature>
<feature type="peptide" id="PRO_0000439769" description="Brevinin-1SN1" evidence="3">
    <location>
        <begin position="48"/>
        <end position="71"/>
    </location>
</feature>
<feature type="disulfide bond" evidence="1">
    <location>
        <begin position="65"/>
        <end position="71"/>
    </location>
</feature>